<comment type="function">
    <text evidence="2">Receptor for angiotensin II, a vasoconstricting peptide. Signals primarily via a non-canonical G-protein- and beta-arrestin independent pathways. Cooperates with MTUS1 to inhibit ERK2 activation and cell proliferation.</text>
</comment>
<comment type="subunit">
    <text evidence="2">Interacts with MTUS1.</text>
</comment>
<comment type="subcellular location">
    <subcellularLocation>
        <location evidence="1">Cell membrane</location>
        <topology evidence="2">Multi-pass membrane protein</topology>
    </subcellularLocation>
</comment>
<comment type="domain">
    <text evidence="2">Helix VIII may act as a gatekeeper for either suppression or activation of the receptor, depending on post-translational modifications and interactions with various receptor partners. Helix VIII is found in a non-canonical position, stabilizing the active-like state, but at the same time preventing the recruitment of G-proteins or beta-arrestins. Upon switching to a membrane-bound conformation, helix VIII can support the recruitment of G proteins and beta-arrestins.</text>
</comment>
<comment type="similarity">
    <text evidence="4">Belongs to the G-protein coupled receptor 1 family.</text>
</comment>
<proteinExistence type="evidence at transcript level"/>
<dbReference type="EMBL" id="AMGL01118537">
    <property type="status" value="NOT_ANNOTATED_CDS"/>
    <property type="molecule type" value="Genomic_DNA"/>
</dbReference>
<dbReference type="EMBL" id="S81979">
    <property type="protein sequence ID" value="AAB36404.1"/>
    <property type="molecule type" value="mRNA"/>
</dbReference>
<dbReference type="RefSeq" id="XP_011962878.1">
    <property type="nucleotide sequence ID" value="XM_012107488.4"/>
</dbReference>
<dbReference type="RefSeq" id="XP_011962879.1">
    <property type="nucleotide sequence ID" value="XM_012107489.1"/>
</dbReference>
<dbReference type="RefSeq" id="XP_014960561.1">
    <property type="nucleotide sequence ID" value="XM_015105075.1"/>
</dbReference>
<dbReference type="RefSeq" id="XP_042097707.1">
    <property type="nucleotide sequence ID" value="XM_042241773.2"/>
</dbReference>
<dbReference type="RefSeq" id="XP_060264447.1">
    <property type="nucleotide sequence ID" value="XM_060408464.1"/>
</dbReference>
<dbReference type="SMR" id="Q28929"/>
<dbReference type="STRING" id="9940.ENSOARP00000010536"/>
<dbReference type="GlyCosmos" id="Q28929">
    <property type="glycosylation" value="5 sites, No reported glycans"/>
</dbReference>
<dbReference type="PaxDb" id="9940-ENSOARP00000010536"/>
<dbReference type="Ensembl" id="ENSOART00185058209">
    <property type="protein sequence ID" value="ENSOARP00185029498"/>
    <property type="gene ID" value="ENSOARG00185034888"/>
</dbReference>
<dbReference type="Ensembl" id="ENSOART00215078811">
    <property type="protein sequence ID" value="ENSOARP00215043511"/>
    <property type="gene ID" value="ENSOARG00215046370"/>
</dbReference>
<dbReference type="Ensembl" id="ENSOART00220083956">
    <property type="protein sequence ID" value="ENSOARP00220045390"/>
    <property type="gene ID" value="ENSOARG00220050463"/>
</dbReference>
<dbReference type="Ensembl" id="ENSOART00225055616">
    <property type="protein sequence ID" value="ENSOARP00225027869"/>
    <property type="gene ID" value="ENSOARG00225033633"/>
</dbReference>
<dbReference type="GeneID" id="443335"/>
<dbReference type="KEGG" id="oas:443335"/>
<dbReference type="CTD" id="186"/>
<dbReference type="eggNOG" id="KOG3656">
    <property type="taxonomic scope" value="Eukaryota"/>
</dbReference>
<dbReference type="OMA" id="TFNCSHK"/>
<dbReference type="OrthoDB" id="8804420at2759"/>
<dbReference type="Proteomes" id="UP000002356">
    <property type="component" value="Chromosome X"/>
</dbReference>
<dbReference type="Bgee" id="ENSOARG00000009828">
    <property type="expression patterns" value="Expressed in aortic valve and 28 other cell types or tissues"/>
</dbReference>
<dbReference type="GO" id="GO:0009897">
    <property type="term" value="C:external side of plasma membrane"/>
    <property type="evidence" value="ECO:0007669"/>
    <property type="project" value="TreeGrafter"/>
</dbReference>
<dbReference type="GO" id="GO:0004945">
    <property type="term" value="F:angiotensin type II receptor activity"/>
    <property type="evidence" value="ECO:0000250"/>
    <property type="project" value="UniProtKB"/>
</dbReference>
<dbReference type="GO" id="GO:0019957">
    <property type="term" value="F:C-C chemokine binding"/>
    <property type="evidence" value="ECO:0007669"/>
    <property type="project" value="TreeGrafter"/>
</dbReference>
<dbReference type="GO" id="GO:0016493">
    <property type="term" value="F:C-C chemokine receptor activity"/>
    <property type="evidence" value="ECO:0007669"/>
    <property type="project" value="TreeGrafter"/>
</dbReference>
<dbReference type="GO" id="GO:0019722">
    <property type="term" value="P:calcium-mediated signaling"/>
    <property type="evidence" value="ECO:0007669"/>
    <property type="project" value="TreeGrafter"/>
</dbReference>
<dbReference type="GO" id="GO:0006955">
    <property type="term" value="P:immune response"/>
    <property type="evidence" value="ECO:0007669"/>
    <property type="project" value="TreeGrafter"/>
</dbReference>
<dbReference type="GO" id="GO:0006954">
    <property type="term" value="P:inflammatory response"/>
    <property type="evidence" value="ECO:0007669"/>
    <property type="project" value="InterPro"/>
</dbReference>
<dbReference type="GO" id="GO:0051387">
    <property type="term" value="P:negative regulation of neurotrophin TRK receptor signaling pathway"/>
    <property type="evidence" value="ECO:0007669"/>
    <property type="project" value="Ensembl"/>
</dbReference>
<dbReference type="GO" id="GO:0030593">
    <property type="term" value="P:neutrophil chemotaxis"/>
    <property type="evidence" value="ECO:0007669"/>
    <property type="project" value="TreeGrafter"/>
</dbReference>
<dbReference type="GO" id="GO:0007204">
    <property type="term" value="P:positive regulation of cytosolic calcium ion concentration"/>
    <property type="evidence" value="ECO:0007669"/>
    <property type="project" value="TreeGrafter"/>
</dbReference>
<dbReference type="GO" id="GO:2001238">
    <property type="term" value="P:positive regulation of extrinsic apoptotic signaling pathway"/>
    <property type="evidence" value="ECO:0007669"/>
    <property type="project" value="Ensembl"/>
</dbReference>
<dbReference type="GO" id="GO:0042311">
    <property type="term" value="P:vasodilation"/>
    <property type="evidence" value="ECO:0007669"/>
    <property type="project" value="Ensembl"/>
</dbReference>
<dbReference type="CDD" id="cd15191">
    <property type="entry name" value="7tmA_AT2R"/>
    <property type="match status" value="1"/>
</dbReference>
<dbReference type="FunFam" id="1.20.1070.10:FF:000161">
    <property type="entry name" value="type-2 angiotensin II receptor"/>
    <property type="match status" value="1"/>
</dbReference>
<dbReference type="Gene3D" id="1.20.1070.10">
    <property type="entry name" value="Rhodopsin 7-helix transmembrane proteins"/>
    <property type="match status" value="1"/>
</dbReference>
<dbReference type="InterPro" id="IPR000147">
    <property type="entry name" value="ATII_AT2_rcpt"/>
</dbReference>
<dbReference type="InterPro" id="IPR000248">
    <property type="entry name" value="ATII_rcpt"/>
</dbReference>
<dbReference type="InterPro" id="IPR050119">
    <property type="entry name" value="CCR1-9-like"/>
</dbReference>
<dbReference type="InterPro" id="IPR000276">
    <property type="entry name" value="GPCR_Rhodpsn"/>
</dbReference>
<dbReference type="InterPro" id="IPR017452">
    <property type="entry name" value="GPCR_Rhodpsn_7TM"/>
</dbReference>
<dbReference type="PANTHER" id="PTHR10489">
    <property type="entry name" value="CELL ADHESION MOLECULE"/>
    <property type="match status" value="1"/>
</dbReference>
<dbReference type="PANTHER" id="PTHR10489:SF952">
    <property type="entry name" value="TYPE-2 ANGIOTENSIN II RECEPTOR"/>
    <property type="match status" value="1"/>
</dbReference>
<dbReference type="Pfam" id="PF00001">
    <property type="entry name" value="7tm_1"/>
    <property type="match status" value="1"/>
</dbReference>
<dbReference type="PRINTS" id="PR00241">
    <property type="entry name" value="ANGIOTENSINR"/>
</dbReference>
<dbReference type="PRINTS" id="PR00636">
    <property type="entry name" value="ANGIOTENSN2R"/>
</dbReference>
<dbReference type="PRINTS" id="PR00237">
    <property type="entry name" value="GPCRRHODOPSN"/>
</dbReference>
<dbReference type="SUPFAM" id="SSF81321">
    <property type="entry name" value="Family A G protein-coupled receptor-like"/>
    <property type="match status" value="1"/>
</dbReference>
<dbReference type="PROSITE" id="PS00237">
    <property type="entry name" value="G_PROTEIN_RECEP_F1_1"/>
    <property type="match status" value="1"/>
</dbReference>
<dbReference type="PROSITE" id="PS50262">
    <property type="entry name" value="G_PROTEIN_RECEP_F1_2"/>
    <property type="match status" value="1"/>
</dbReference>
<evidence type="ECO:0000250" key="1">
    <source>
        <dbReference type="UniProtKB" id="P35374"/>
    </source>
</evidence>
<evidence type="ECO:0000250" key="2">
    <source>
        <dbReference type="UniProtKB" id="P50052"/>
    </source>
</evidence>
<evidence type="ECO:0000255" key="3"/>
<evidence type="ECO:0000255" key="4">
    <source>
        <dbReference type="PROSITE-ProRule" id="PRU00521"/>
    </source>
</evidence>
<evidence type="ECO:0000303" key="5">
    <source>
    </source>
</evidence>
<organism>
    <name type="scientific">Ovis aries</name>
    <name type="common">Sheep</name>
    <dbReference type="NCBI Taxonomy" id="9940"/>
    <lineage>
        <taxon>Eukaryota</taxon>
        <taxon>Metazoa</taxon>
        <taxon>Chordata</taxon>
        <taxon>Craniata</taxon>
        <taxon>Vertebrata</taxon>
        <taxon>Euteleostomi</taxon>
        <taxon>Mammalia</taxon>
        <taxon>Eutheria</taxon>
        <taxon>Laurasiatheria</taxon>
        <taxon>Artiodactyla</taxon>
        <taxon>Ruminantia</taxon>
        <taxon>Pecora</taxon>
        <taxon>Bovidae</taxon>
        <taxon>Caprinae</taxon>
        <taxon>Ovis</taxon>
    </lineage>
</organism>
<gene>
    <name type="primary">AGTR2</name>
</gene>
<accession>Q28929</accession>
<accession>W5PJB5</accession>
<keyword id="KW-1003">Cell membrane</keyword>
<keyword id="KW-1015">Disulfide bond</keyword>
<keyword id="KW-0297">G-protein coupled receptor</keyword>
<keyword id="KW-0325">Glycoprotein</keyword>
<keyword id="KW-0472">Membrane</keyword>
<keyword id="KW-0675">Receptor</keyword>
<keyword id="KW-1185">Reference proteome</keyword>
<keyword id="KW-0807">Transducer</keyword>
<keyword id="KW-0812">Transmembrane</keyword>
<keyword id="KW-1133">Transmembrane helix</keyword>
<protein>
    <recommendedName>
        <fullName>Type-2 angiotensin II receptor</fullName>
    </recommendedName>
    <alternativeName>
        <fullName>Angiotensin II type-2 receptor</fullName>
        <shortName evidence="5">AT2 receptor</shortName>
    </alternativeName>
</protein>
<feature type="chain" id="PRO_0000069171" description="Type-2 angiotensin II receptor">
    <location>
        <begin position="1"/>
        <end position="362"/>
    </location>
</feature>
<feature type="topological domain" description="Extracellular" evidence="2">
    <location>
        <begin position="1"/>
        <end position="44"/>
    </location>
</feature>
<feature type="transmembrane region" description="Helical; Name=1" evidence="2">
    <location>
        <begin position="45"/>
        <end position="69"/>
    </location>
</feature>
<feature type="topological domain" description="Cytoplasmic" evidence="2">
    <location>
        <begin position="70"/>
        <end position="79"/>
    </location>
</feature>
<feature type="transmembrane region" description="Helical; Name=2" evidence="2">
    <location>
        <begin position="80"/>
        <end position="103"/>
    </location>
</feature>
<feature type="topological domain" description="Extracellular" evidence="2">
    <location>
        <begin position="104"/>
        <end position="113"/>
    </location>
</feature>
<feature type="transmembrane region" description="Helical; Name=3" evidence="2">
    <location>
        <begin position="114"/>
        <end position="139"/>
    </location>
</feature>
<feature type="topological domain" description="Cytoplasmic" evidence="2">
    <location>
        <begin position="140"/>
        <end position="158"/>
    </location>
</feature>
<feature type="transmembrane region" description="Helical; Name=4" evidence="2">
    <location>
        <begin position="159"/>
        <end position="180"/>
    </location>
</feature>
<feature type="topological domain" description="Extracellular" evidence="2">
    <location>
        <begin position="181"/>
        <end position="205"/>
    </location>
</feature>
<feature type="transmembrane region" description="Helical; Name=5" evidence="2">
    <location>
        <begin position="206"/>
        <end position="231"/>
    </location>
</feature>
<feature type="topological domain" description="Cytoplasmic" evidence="2">
    <location>
        <begin position="232"/>
        <end position="256"/>
    </location>
</feature>
<feature type="transmembrane region" description="Helical; Name=6" evidence="2">
    <location>
        <begin position="257"/>
        <end position="280"/>
    </location>
</feature>
<feature type="topological domain" description="Extracellular" evidence="2">
    <location>
        <begin position="281"/>
        <end position="293"/>
    </location>
</feature>
<feature type="transmembrane region" description="Helical; Name=7" evidence="2">
    <location>
        <begin position="294"/>
        <end position="319"/>
    </location>
</feature>
<feature type="topological domain" description="Cytoplasmic" evidence="2">
    <location>
        <begin position="320"/>
        <end position="362"/>
    </location>
</feature>
<feature type="region of interest" description="Helix VIII" evidence="2">
    <location>
        <begin position="323"/>
        <end position="332"/>
    </location>
</feature>
<feature type="binding site" evidence="2">
    <location>
        <position position="102"/>
    </location>
    <ligand>
        <name>angiotensin II</name>
        <dbReference type="ChEBI" id="CHEBI:58506"/>
    </ligand>
</feature>
<feature type="binding site" evidence="2">
    <location>
        <position position="103"/>
    </location>
    <ligand>
        <name>angiotensin II</name>
        <dbReference type="ChEBI" id="CHEBI:58506"/>
    </ligand>
</feature>
<feature type="binding site" evidence="2">
    <location>
        <position position="181"/>
    </location>
    <ligand>
        <name>angiotensin II</name>
        <dbReference type="ChEBI" id="CHEBI:58506"/>
    </ligand>
</feature>
<feature type="binding site" evidence="2">
    <location>
        <position position="203"/>
    </location>
    <ligand>
        <name>angiotensin II</name>
        <dbReference type="ChEBI" id="CHEBI:58506"/>
    </ligand>
</feature>
<feature type="binding site" evidence="2">
    <location>
        <position position="214"/>
    </location>
    <ligand>
        <name>angiotensin II</name>
        <dbReference type="ChEBI" id="CHEBI:58506"/>
    </ligand>
</feature>
<feature type="binding site" evidence="2">
    <location>
        <position position="278"/>
    </location>
    <ligand>
        <name>angiotensin II</name>
        <dbReference type="ChEBI" id="CHEBI:58506"/>
    </ligand>
</feature>
<feature type="binding site" evidence="2">
    <location>
        <position position="296"/>
    </location>
    <ligand>
        <name>angiotensin II</name>
        <dbReference type="ChEBI" id="CHEBI:58506"/>
    </ligand>
</feature>
<feature type="glycosylation site" description="N-linked (GlcNAc...) asparagine" evidence="3">
    <location>
        <position position="4"/>
    </location>
</feature>
<feature type="glycosylation site" description="N-linked (GlcNAc...) asparagine" evidence="3">
    <location>
        <position position="13"/>
    </location>
</feature>
<feature type="glycosylation site" description="N-linked (GlcNAc...) asparagine" evidence="3">
    <location>
        <position position="24"/>
    </location>
</feature>
<feature type="glycosylation site" description="N-linked (GlcNAc...) asparagine" evidence="3">
    <location>
        <position position="28"/>
    </location>
</feature>
<feature type="glycosylation site" description="N-linked (GlcNAc...) asparagine" evidence="3">
    <location>
        <position position="33"/>
    </location>
</feature>
<feature type="disulfide bond" evidence="2">
    <location>
        <begin position="34"/>
        <end position="289"/>
    </location>
</feature>
<feature type="disulfide bond" evidence="4">
    <location>
        <begin position="116"/>
        <end position="194"/>
    </location>
</feature>
<feature type="sequence conflict" description="In Ref. 2; AAB36404." ref="2">
    <original>F</original>
    <variation>W</variation>
    <location>
        <position position="54"/>
    </location>
</feature>
<feature type="sequence conflict" description="In Ref. 2; AAB36404." ref="2">
    <original>V</original>
    <variation>G</variation>
    <location>
        <position position="166"/>
    </location>
</feature>
<name>AGTR2_SHEEP</name>
<sequence>MKANFSLATISKNITSSLHVGFVNISSNESTFNCSHKPSDKHLDAIPVLYYIIFGVGFLVNTIVVTLFCCQKGPKKVSSIYIFNLAVADLLLLATLPLWATYYSHRYDWIFGPVMCKVFGSFLTLNMFASIFFITCMSVDRYQSVIYPFLSQRRNPWQASYIVPLVWCMACLSSLPTFYFRDVRTIEYLGVNACIMAFPPEKYAQWSAGIALMKNILGFIIPLIFIATCYFGIRKHLLKTNSYGKNRITRDQVLKMAAAVVLAFIICWLPFHVLTFLDALAWMGVINSCEVIAVIDLALPFAILLGFTNSCINPFLYCFVGNRFQQKLRRVFRVPITWLQGKRENGSCGKSSSFREMETFVS</sequence>
<reference key="1">
    <citation type="journal article" date="2010" name="Anim. Genet.">
        <title>The sheep genome reference sequence: a work in progress.</title>
        <authorList>
            <person name="Archibald A.L."/>
            <person name="Cockett N.E."/>
            <person name="Dalrymple B.P."/>
            <person name="Faraut T."/>
            <person name="Kijas J.W."/>
            <person name="Maddox J.F."/>
            <person name="McEwan J.C."/>
            <person name="Hutton Oddy V."/>
            <person name="Raadsma H.W."/>
            <person name="Wade C."/>
            <person name="Wang J."/>
            <person name="Wang W."/>
            <person name="Xun X."/>
        </authorList>
    </citation>
    <scope>NUCLEOTIDE SEQUENCE [LARGE SCALE GENOMIC DNA]</scope>
</reference>
<reference key="2">
    <citation type="journal article" date="1995" name="Pediatr. Res.">
        <title>Differential gene expression and regulation of renal angiotensin II receptor subtypes (AT1 and AT2) during fetal life in sheep.</title>
        <authorList>
            <person name="Robillard J.E."/>
            <person name="Page W.V."/>
            <person name="Mathews M.S."/>
            <person name="Schutte B.C."/>
            <person name="Nuyt A.M."/>
            <person name="Segar J.L."/>
        </authorList>
    </citation>
    <scope>NUCLEOTIDE SEQUENCE [MRNA] OF 47-306</scope>
    <source>
        <tissue>Kidney</tissue>
    </source>
</reference>